<name>RL332_MYCVP</name>
<reference key="1">
    <citation type="submission" date="2006-12" db="EMBL/GenBank/DDBJ databases">
        <title>Complete sequence of Mycobacterium vanbaalenii PYR-1.</title>
        <authorList>
            <consortium name="US DOE Joint Genome Institute"/>
            <person name="Copeland A."/>
            <person name="Lucas S."/>
            <person name="Lapidus A."/>
            <person name="Barry K."/>
            <person name="Detter J.C."/>
            <person name="Glavina del Rio T."/>
            <person name="Hammon N."/>
            <person name="Israni S."/>
            <person name="Dalin E."/>
            <person name="Tice H."/>
            <person name="Pitluck S."/>
            <person name="Singan V."/>
            <person name="Schmutz J."/>
            <person name="Larimer F."/>
            <person name="Land M."/>
            <person name="Hauser L."/>
            <person name="Kyrpides N."/>
            <person name="Anderson I.J."/>
            <person name="Miller C."/>
            <person name="Richardson P."/>
        </authorList>
    </citation>
    <scope>NUCLEOTIDE SEQUENCE [LARGE SCALE GENOMIC DNA]</scope>
    <source>
        <strain>DSM 7251 / JCM 13017 / BCRC 16820 / KCTC 9966 / NRRL B-24157 / PYR-1</strain>
    </source>
</reference>
<comment type="similarity">
    <text evidence="1">Belongs to the bacterial ribosomal protein bL33 family.</text>
</comment>
<dbReference type="EMBL" id="CP000511">
    <property type="protein sequence ID" value="ABM16259.1"/>
    <property type="molecule type" value="Genomic_DNA"/>
</dbReference>
<dbReference type="SMR" id="A1TGF9"/>
<dbReference type="STRING" id="350058.Mvan_5490"/>
<dbReference type="KEGG" id="mva:Mvan_5490"/>
<dbReference type="eggNOG" id="COG0267">
    <property type="taxonomic scope" value="Bacteria"/>
</dbReference>
<dbReference type="HOGENOM" id="CLU_190949_1_1_11"/>
<dbReference type="Proteomes" id="UP000009159">
    <property type="component" value="Chromosome"/>
</dbReference>
<dbReference type="GO" id="GO:0022625">
    <property type="term" value="C:cytosolic large ribosomal subunit"/>
    <property type="evidence" value="ECO:0007669"/>
    <property type="project" value="TreeGrafter"/>
</dbReference>
<dbReference type="GO" id="GO:0003735">
    <property type="term" value="F:structural constituent of ribosome"/>
    <property type="evidence" value="ECO:0007669"/>
    <property type="project" value="InterPro"/>
</dbReference>
<dbReference type="GO" id="GO:0006412">
    <property type="term" value="P:translation"/>
    <property type="evidence" value="ECO:0007669"/>
    <property type="project" value="UniProtKB-UniRule"/>
</dbReference>
<dbReference type="FunFam" id="2.20.28.120:FF:000002">
    <property type="entry name" value="50S ribosomal protein L33"/>
    <property type="match status" value="1"/>
</dbReference>
<dbReference type="Gene3D" id="2.20.28.120">
    <property type="entry name" value="Ribosomal protein L33"/>
    <property type="match status" value="1"/>
</dbReference>
<dbReference type="HAMAP" id="MF_00294">
    <property type="entry name" value="Ribosomal_bL33"/>
    <property type="match status" value="1"/>
</dbReference>
<dbReference type="InterPro" id="IPR001705">
    <property type="entry name" value="Ribosomal_bL33"/>
</dbReference>
<dbReference type="InterPro" id="IPR018264">
    <property type="entry name" value="Ribosomal_bL33_CS"/>
</dbReference>
<dbReference type="InterPro" id="IPR038584">
    <property type="entry name" value="Ribosomal_bL33_sf"/>
</dbReference>
<dbReference type="InterPro" id="IPR011332">
    <property type="entry name" value="Ribosomal_zn-bd"/>
</dbReference>
<dbReference type="NCBIfam" id="NF001860">
    <property type="entry name" value="PRK00595.1"/>
    <property type="match status" value="1"/>
</dbReference>
<dbReference type="NCBIfam" id="TIGR01023">
    <property type="entry name" value="rpmG_bact"/>
    <property type="match status" value="1"/>
</dbReference>
<dbReference type="PANTHER" id="PTHR15238">
    <property type="entry name" value="54S RIBOSOMAL PROTEIN L39, MITOCHONDRIAL"/>
    <property type="match status" value="1"/>
</dbReference>
<dbReference type="PANTHER" id="PTHR15238:SF1">
    <property type="entry name" value="LARGE RIBOSOMAL SUBUNIT PROTEIN BL33M"/>
    <property type="match status" value="1"/>
</dbReference>
<dbReference type="Pfam" id="PF00471">
    <property type="entry name" value="Ribosomal_L33"/>
    <property type="match status" value="1"/>
</dbReference>
<dbReference type="SUPFAM" id="SSF57829">
    <property type="entry name" value="Zn-binding ribosomal proteins"/>
    <property type="match status" value="1"/>
</dbReference>
<dbReference type="PROSITE" id="PS00582">
    <property type="entry name" value="RIBOSOMAL_L33"/>
    <property type="match status" value="1"/>
</dbReference>
<keyword id="KW-0687">Ribonucleoprotein</keyword>
<keyword id="KW-0689">Ribosomal protein</keyword>
<feature type="chain" id="PRO_0000356567" description="Large ribosomal subunit protein bL33B">
    <location>
        <begin position="1"/>
        <end position="54"/>
    </location>
</feature>
<protein>
    <recommendedName>
        <fullName evidence="1">Large ribosomal subunit protein bL33B</fullName>
    </recommendedName>
    <alternativeName>
        <fullName evidence="1">50S ribosomal protein L33 2</fullName>
    </alternativeName>
</protein>
<sequence length="54" mass="6588">MARNEIRPLVKLRSTAGTGYTYITRKNRRNDPDRITLRKYDPVVRRHVDFREER</sequence>
<gene>
    <name evidence="1" type="primary">rpmG2</name>
    <name type="ordered locus">Mvan_5490</name>
</gene>
<evidence type="ECO:0000255" key="1">
    <source>
        <dbReference type="HAMAP-Rule" id="MF_00294"/>
    </source>
</evidence>
<accession>A1TGF9</accession>
<proteinExistence type="inferred from homology"/>
<organism>
    <name type="scientific">Mycolicibacterium vanbaalenii (strain DSM 7251 / JCM 13017 / BCRC 16820 / KCTC 9966 / NRRL B-24157 / PYR-1)</name>
    <name type="common">Mycobacterium vanbaalenii</name>
    <dbReference type="NCBI Taxonomy" id="350058"/>
    <lineage>
        <taxon>Bacteria</taxon>
        <taxon>Bacillati</taxon>
        <taxon>Actinomycetota</taxon>
        <taxon>Actinomycetes</taxon>
        <taxon>Mycobacteriales</taxon>
        <taxon>Mycobacteriaceae</taxon>
        <taxon>Mycolicibacterium</taxon>
    </lineage>
</organism>